<sequence>AEYFQHWGQGTLVTVSS</sequence>
<proteinExistence type="predicted"/>
<organism>
    <name type="scientific">Homo sapiens</name>
    <name type="common">Human</name>
    <dbReference type="NCBI Taxonomy" id="9606"/>
    <lineage>
        <taxon>Eukaryota</taxon>
        <taxon>Metazoa</taxon>
        <taxon>Chordata</taxon>
        <taxon>Craniata</taxon>
        <taxon>Vertebrata</taxon>
        <taxon>Euteleostomi</taxon>
        <taxon>Mammalia</taxon>
        <taxon>Eutheria</taxon>
        <taxon>Euarchontoglires</taxon>
        <taxon>Primates</taxon>
        <taxon>Haplorrhini</taxon>
        <taxon>Catarrhini</taxon>
        <taxon>Hominidae</taxon>
        <taxon>Homo</taxon>
    </lineage>
</organism>
<feature type="chain" id="PRO_0000439096" description="Immunoglobulin heavy joining 1">
    <location>
        <begin position="1" status="less than"/>
        <end position="17" status="greater than"/>
    </location>
</feature>
<feature type="non-terminal residue">
    <location>
        <position position="1"/>
    </location>
</feature>
<feature type="non-terminal residue">
    <location>
        <position position="17"/>
    </location>
</feature>
<evidence type="ECO:0000303" key="1">
    <source>
    </source>
</evidence>
<evidence type="ECO:0000303" key="2">
    <source>
    </source>
</evidence>
<evidence type="ECO:0000303" key="3">
    <source>
    </source>
</evidence>
<evidence type="ECO:0000303" key="4">
    <source>
    </source>
</evidence>
<evidence type="ECO:0000303" key="5">
    <source>
    </source>
</evidence>
<evidence type="ECO:0000303" key="6">
    <source ref="3"/>
</evidence>
<evidence type="ECO:0000305" key="7"/>
<protein>
    <recommendedName>
        <fullName evidence="1 6">Immunoglobulin heavy joining 1</fullName>
    </recommendedName>
</protein>
<accession>A0A0C4DH62</accession>
<dbReference type="EMBL" id="AC246787">
    <property type="status" value="NOT_ANNOTATED_CDS"/>
    <property type="molecule type" value="Genomic_DNA"/>
</dbReference>
<dbReference type="IMGT_GENE-DB" id="IGHJ1"/>
<dbReference type="BioMuta" id="IGHJ1"/>
<dbReference type="Ensembl" id="ENST00000390565.1">
    <property type="protein sequence ID" value="ENSP00000418050.1"/>
    <property type="gene ID" value="ENSG00000211905.1"/>
</dbReference>
<dbReference type="Ensembl" id="ENST00000634062.1">
    <property type="protein sequence ID" value="ENSP00000488542.1"/>
    <property type="gene ID" value="ENSG00000282409.1"/>
</dbReference>
<dbReference type="AGR" id="HGNC:5532"/>
<dbReference type="GeneCards" id="IGHJ1"/>
<dbReference type="HGNC" id="HGNC:5532">
    <property type="gene designation" value="IGHJ1"/>
</dbReference>
<dbReference type="HPA" id="ENSG00000211905">
    <property type="expression patterns" value="Group enriched (intestine, lymphoid tissue, salivary gland, stomach)"/>
</dbReference>
<dbReference type="neXtProt" id="NX_A0A0C4DH62"/>
<dbReference type="VEuPathDB" id="HostDB:ENSG00000211905"/>
<dbReference type="HOGENOM" id="CLU_221942_5_1_1"/>
<dbReference type="InParanoid" id="A0A0C4DH62"/>
<dbReference type="PAN-GO" id="A0A0C4DH62">
    <property type="GO annotations" value="0 GO annotations based on evolutionary models"/>
</dbReference>
<dbReference type="ChiTaRS" id="IGHJ1">
    <property type="organism name" value="human"/>
</dbReference>
<dbReference type="Pharos" id="A0A0C4DH62">
    <property type="development level" value="Tdark"/>
</dbReference>
<dbReference type="PRO" id="PR:A0A0C4DH62"/>
<dbReference type="Proteomes" id="UP000005640">
    <property type="component" value="Chromosome 14"/>
</dbReference>
<dbReference type="Bgee" id="ENSG00000211905">
    <property type="expression patterns" value="Expressed in duodenum and 81 other cell types or tissues"/>
</dbReference>
<dbReference type="GO" id="GO:0005576">
    <property type="term" value="C:extracellular region"/>
    <property type="evidence" value="ECO:0007669"/>
    <property type="project" value="UniProtKB-SubCell"/>
</dbReference>
<dbReference type="GO" id="GO:0019814">
    <property type="term" value="C:immunoglobulin complex"/>
    <property type="evidence" value="ECO:0007669"/>
    <property type="project" value="UniProtKB-KW"/>
</dbReference>
<dbReference type="GO" id="GO:0005886">
    <property type="term" value="C:plasma membrane"/>
    <property type="evidence" value="ECO:0007669"/>
    <property type="project" value="UniProtKB-SubCell"/>
</dbReference>
<dbReference type="GO" id="GO:0002250">
    <property type="term" value="P:adaptive immune response"/>
    <property type="evidence" value="ECO:0007669"/>
    <property type="project" value="UniProtKB-KW"/>
</dbReference>
<dbReference type="InterPro" id="IPR036179">
    <property type="entry name" value="Ig-like_dom_sf"/>
</dbReference>
<dbReference type="SUPFAM" id="SSF48726">
    <property type="entry name" value="Immunoglobulin"/>
    <property type="match status" value="1"/>
</dbReference>
<keyword id="KW-1064">Adaptive immunity</keyword>
<keyword id="KW-1003">Cell membrane</keyword>
<keyword id="KW-0391">Immunity</keyword>
<keyword id="KW-1280">Immunoglobulin</keyword>
<keyword id="KW-0472">Membrane</keyword>
<keyword id="KW-1185">Reference proteome</keyword>
<keyword id="KW-0964">Secreted</keyword>
<gene>
    <name evidence="1 6" type="primary">IGHJ1</name>
</gene>
<name>HJ01_HUMAN</name>
<reference key="1">
    <citation type="journal article" date="2003" name="Nature">
        <title>The DNA sequence and analysis of human chromosome 14.</title>
        <authorList>
            <person name="Heilig R."/>
            <person name="Eckenberg R."/>
            <person name="Petit J.-L."/>
            <person name="Fonknechten N."/>
            <person name="Da Silva C."/>
            <person name="Cattolico L."/>
            <person name="Levy M."/>
            <person name="Barbe V."/>
            <person name="De Berardinis V."/>
            <person name="Ureta-Vidal A."/>
            <person name="Pelletier E."/>
            <person name="Vico V."/>
            <person name="Anthouard V."/>
            <person name="Rowen L."/>
            <person name="Madan A."/>
            <person name="Qin S."/>
            <person name="Sun H."/>
            <person name="Du H."/>
            <person name="Pepin K."/>
            <person name="Artiguenave F."/>
            <person name="Robert C."/>
            <person name="Cruaud C."/>
            <person name="Bruels T."/>
            <person name="Jaillon O."/>
            <person name="Friedlander L."/>
            <person name="Samson G."/>
            <person name="Brottier P."/>
            <person name="Cure S."/>
            <person name="Segurens B."/>
            <person name="Aniere F."/>
            <person name="Samain S."/>
            <person name="Crespeau H."/>
            <person name="Abbasi N."/>
            <person name="Aiach N."/>
            <person name="Boscus D."/>
            <person name="Dickhoff R."/>
            <person name="Dors M."/>
            <person name="Dubois I."/>
            <person name="Friedman C."/>
            <person name="Gouyvenoux M."/>
            <person name="James R."/>
            <person name="Madan A."/>
            <person name="Mairey-Estrada B."/>
            <person name="Mangenot S."/>
            <person name="Martins N."/>
            <person name="Menard M."/>
            <person name="Oztas S."/>
            <person name="Ratcliffe A."/>
            <person name="Shaffer T."/>
            <person name="Trask B."/>
            <person name="Vacherie B."/>
            <person name="Bellemere C."/>
            <person name="Belser C."/>
            <person name="Besnard-Gonnet M."/>
            <person name="Bartol-Mavel D."/>
            <person name="Boutard M."/>
            <person name="Briez-Silla S."/>
            <person name="Combette S."/>
            <person name="Dufosse-Laurent V."/>
            <person name="Ferron C."/>
            <person name="Lechaplais C."/>
            <person name="Louesse C."/>
            <person name="Muselet D."/>
            <person name="Magdelenat G."/>
            <person name="Pateau E."/>
            <person name="Petit E."/>
            <person name="Sirvain-Trukniewicz P."/>
            <person name="Trybou A."/>
            <person name="Vega-Czarny N."/>
            <person name="Bataille E."/>
            <person name="Bluet E."/>
            <person name="Bordelais I."/>
            <person name="Dubois M."/>
            <person name="Dumont C."/>
            <person name="Guerin T."/>
            <person name="Haffray S."/>
            <person name="Hammadi R."/>
            <person name="Muanga J."/>
            <person name="Pellouin V."/>
            <person name="Robert D."/>
            <person name="Wunderle E."/>
            <person name="Gauguet G."/>
            <person name="Roy A."/>
            <person name="Sainte-Marthe L."/>
            <person name="Verdier J."/>
            <person name="Verdier-Discala C."/>
            <person name="Hillier L.W."/>
            <person name="Fulton L."/>
            <person name="McPherson J."/>
            <person name="Matsuda F."/>
            <person name="Wilson R."/>
            <person name="Scarpelli C."/>
            <person name="Gyapay G."/>
            <person name="Wincker P."/>
            <person name="Saurin W."/>
            <person name="Quetier F."/>
            <person name="Waterston R."/>
            <person name="Hood L."/>
            <person name="Weissenbach J."/>
        </authorList>
    </citation>
    <scope>NUCLEOTIDE SEQUENCE [LARGE SCALE GENOMIC DNA] (IMGT ALLELE IGHJ1*01)</scope>
</reference>
<reference key="2">
    <citation type="journal article" date="2001" name="Exp. Clin. Immunogenet.">
        <title>Nomenclature of the human immunoglobulin heavy (IGH) genes.</title>
        <authorList>
            <person name="Lefranc M.P."/>
        </authorList>
    </citation>
    <scope>NOMENCLATURE</scope>
</reference>
<reference key="3">
    <citation type="book" date="2001" name="The Immunoglobulin FactsBook.">
        <title>The Immunoglobulin FactsBook.</title>
        <editorList>
            <person name="Lefranc M.P."/>
            <person name="Lefranc G."/>
        </editorList>
        <authorList>
            <person name="Lefranc M.P."/>
            <person name="Lefranc G."/>
        </authorList>
    </citation>
    <scope>NOMENCLATURE</scope>
</reference>
<reference key="4">
    <citation type="journal article" date="2007" name="Annu. Rev. Genet.">
        <title>Immunoglobulin somatic hypermutation.</title>
        <authorList>
            <person name="Teng G."/>
            <person name="Papavasiliou F.N."/>
        </authorList>
    </citation>
    <scope>REVIEW ON SOMATIC HYPERMUTATION</scope>
</reference>
<reference key="5">
    <citation type="journal article" date="2010" name="J. Allergy Clin. Immunol.">
        <title>Structure and function of immunoglobulins.</title>
        <authorList>
            <person name="Schroeder H.W. Jr."/>
            <person name="Cavacini L."/>
        </authorList>
    </citation>
    <scope>REVIEW ON IMMUNOGLOBULINS</scope>
</reference>
<reference key="6">
    <citation type="journal article" date="2012" name="Nat. Rev. Immunol.">
        <title>Molecular programming of B cell memory.</title>
        <authorList>
            <person name="McHeyzer-Williams M."/>
            <person name="Okitsu S."/>
            <person name="Wang N."/>
            <person name="McHeyzer-Williams L."/>
        </authorList>
    </citation>
    <scope>REVIEW ON FUNCTION</scope>
</reference>
<reference key="7">
    <citation type="journal article" date="2014" name="Front. Immunol.">
        <title>Immunoglobulin and T Cell Receptor Genes: IMGT((R)) and the Birth and Rise of Immunoinformatics.</title>
        <authorList>
            <person name="Lefranc M.P."/>
        </authorList>
    </citation>
    <scope>NOMENCLATURE</scope>
</reference>
<comment type="function">
    <text evidence="2 3 4 5">J region of the variable domain of immunoglobulin heavy chains that participates in the antigen recognition (PubMed:24600447). Immunoglobulins, also known as antibodies, are membrane-bound or secreted glycoproteins produced by B lymphocytes. In the recognition phase of humoral immunity, the membrane-bound immunoglobulins serve as receptors which, upon binding of a specific antigen, trigger the clonal expansion and differentiation of B lymphocytes into immunoglobulins-secreting plasma cells. Secreted immunoglobulins mediate the effector phase of humoral immunity, which results in the elimination of bound antigens (PubMed:20176268, PubMed:22158414). The antigen binding site is formed by the variable domain of one heavy chain, together with that of its associated light chain. Thus, each immunoglobulin has two antigen binding sites with remarkable affinity for a particular antigen. The variable domains are assembled by a process called V-(D)-J rearrangement and can then be subjected to somatic hypermutations which, after exposure to antigen and selection, allow affinity maturation for a particular antigen (PubMed:17576170, PubMed:20176268).</text>
</comment>
<comment type="subunit">
    <text evidence="3">Immunoglobulins are composed of two identical heavy chains and two identical light chains; disulfide-linked.</text>
</comment>
<comment type="subcellular location">
    <subcellularLocation>
        <location evidence="3 4">Secreted</location>
    </subcellularLocation>
    <subcellularLocation>
        <location evidence="3 4">Cell membrane</location>
    </subcellularLocation>
</comment>
<comment type="polymorphism">
    <text evidence="7">The sequence shown is that of IMGT allele IGHJ1*01.</text>
</comment>
<comment type="caution">
    <text evidence="7">There are several genes encoding the J region in the immunoglobulin heavy locus. The peptide described in this entry is a representative for all the peptides encoded by these genes. For examples of full-length immunoglobulin heavy chains (of different isotypes) see AC P0DOX2, AC P0DOX3, AC P0DOX4, AC P0DOX5 and AC P0DOX6.</text>
</comment>